<reference key="1">
    <citation type="journal article" date="1995" name="DNA Res.">
        <title>Sequence analysis of the genome of the unicellular cyanobacterium Synechocystis sp. strain PCC6803. I. Sequence features in the 1 Mb region from map positions 64% to 92% of the genome.</title>
        <authorList>
            <person name="Kaneko T."/>
            <person name="Tanaka A."/>
            <person name="Sato S."/>
            <person name="Kotani H."/>
            <person name="Sazuka T."/>
            <person name="Miyajima N."/>
            <person name="Sugiura M."/>
            <person name="Tabata S."/>
        </authorList>
    </citation>
    <scope>NUCLEOTIDE SEQUENCE [LARGE SCALE GENOMIC DNA]</scope>
    <source>
        <strain>ATCC 27184 / PCC 6803 / N-1</strain>
    </source>
</reference>
<reference key="2">
    <citation type="journal article" date="1996" name="DNA Res.">
        <title>Sequence analysis of the genome of the unicellular cyanobacterium Synechocystis sp. strain PCC6803. II. Sequence determination of the entire genome and assignment of potential protein-coding regions.</title>
        <authorList>
            <person name="Kaneko T."/>
            <person name="Sato S."/>
            <person name="Kotani H."/>
            <person name="Tanaka A."/>
            <person name="Asamizu E."/>
            <person name="Nakamura Y."/>
            <person name="Miyajima N."/>
            <person name="Hirosawa M."/>
            <person name="Sugiura M."/>
            <person name="Sasamoto S."/>
            <person name="Kimura T."/>
            <person name="Hosouchi T."/>
            <person name="Matsuno A."/>
            <person name="Muraki A."/>
            <person name="Nakazaki N."/>
            <person name="Naruo K."/>
            <person name="Okumura S."/>
            <person name="Shimpo S."/>
            <person name="Takeuchi C."/>
            <person name="Wada T."/>
            <person name="Watanabe A."/>
            <person name="Yamada M."/>
            <person name="Yasuda M."/>
            <person name="Tabata S."/>
        </authorList>
    </citation>
    <scope>NUCLEOTIDE SEQUENCE [LARGE SCALE GENOMIC DNA]</scope>
    <source>
        <strain>ATCC 27184 / PCC 6803 / Kazusa</strain>
    </source>
</reference>
<sequence length="722" mass="80051">MPLQTFLFEIGTEELPADFVRSAITQWQGLIPPGLAAEFLQPESVEIYGTPRRLAVLIKGLPECQPDRLEEIKGPPASAAFKDGQPTPAALGFAKKQGVNPEDFEIRSTPKGDFIFVNKQLQGQASRDLLPKLALSWLKALDGRRFMRWGDGDWRFPRPIRWLVCLLDDQVLPLQIDNGSTTLVGDRLSRGHRILHPADVSLEHGQNYLAQLKTAGVVVDPQERRAMIEQQITTQAATLEGEAIIYEDLLDEVEQLVEYPTAVLGKFDQEFLSLPREVTTTVMVTHQRYFPVVDKDGRLLPHFITIANGDPSKGDIIAAGNGRVIRARLADAKFFYQADCDDSLDSYLPQLETVTFQEELGTMRDKVDRIMEMAAAIADQLGVTEQQRGEIDSTAMLCKADLVTQMVYEFPELQGIMGEKYALVSGESAAVAQGIVEHYLPRHQDDDLPQGLPGQVVGMADRLDTLVSIFGLGLLPTGSSDPFALRRAANAVINVAWAASLEINLLELLTQGCRDFVTSHPDKTSPLQALKTFFLQRLQTLLQDEQGIDYDLVNAVLGNGETNCDEAQSRLHDRLLADLQDVKERAQYLQELRDNGHLDAIYPTVNRSAKLASKGTLPTDQLDPRPVIQAPQLVQDSEKAVYQALLAIYPKAVEVQESRDYETLVNALHELAPTVAEFFDGPDSVLVMAENDELRQNRLNLLGLIRNYALILGDFGAIVKGI</sequence>
<name>SYGB_SYNY3</name>
<gene>
    <name type="primary">glyS</name>
    <name type="ordered locus">slr0220</name>
</gene>
<organism>
    <name type="scientific">Synechocystis sp. (strain ATCC 27184 / PCC 6803 / Kazusa)</name>
    <dbReference type="NCBI Taxonomy" id="1111708"/>
    <lineage>
        <taxon>Bacteria</taxon>
        <taxon>Bacillati</taxon>
        <taxon>Cyanobacteriota</taxon>
        <taxon>Cyanophyceae</taxon>
        <taxon>Synechococcales</taxon>
        <taxon>Merismopediaceae</taxon>
        <taxon>Synechocystis</taxon>
    </lineage>
</organism>
<evidence type="ECO:0000250" key="1"/>
<evidence type="ECO:0000305" key="2"/>
<feature type="chain" id="PRO_0000072933" description="Glycine--tRNA ligase beta subunit">
    <location>
        <begin position="1"/>
        <end position="722"/>
    </location>
</feature>
<accession>Q55690</accession>
<keyword id="KW-0030">Aminoacyl-tRNA synthetase</keyword>
<keyword id="KW-0067">ATP-binding</keyword>
<keyword id="KW-0963">Cytoplasm</keyword>
<keyword id="KW-0436">Ligase</keyword>
<keyword id="KW-0547">Nucleotide-binding</keyword>
<keyword id="KW-0648">Protein biosynthesis</keyword>
<keyword id="KW-1185">Reference proteome</keyword>
<proteinExistence type="inferred from homology"/>
<dbReference type="EC" id="6.1.1.14"/>
<dbReference type="EMBL" id="BA000022">
    <property type="protein sequence ID" value="BAA10219.1"/>
    <property type="molecule type" value="Genomic_DNA"/>
</dbReference>
<dbReference type="PIR" id="S76367">
    <property type="entry name" value="S76367"/>
</dbReference>
<dbReference type="SMR" id="Q55690"/>
<dbReference type="FunCoup" id="Q55690">
    <property type="interactions" value="390"/>
</dbReference>
<dbReference type="IntAct" id="Q55690">
    <property type="interactions" value="1"/>
</dbReference>
<dbReference type="STRING" id="1148.gene:10499718"/>
<dbReference type="PaxDb" id="1148-1001591"/>
<dbReference type="EnsemblBacteria" id="BAA10219">
    <property type="protein sequence ID" value="BAA10219"/>
    <property type="gene ID" value="BAA10219"/>
</dbReference>
<dbReference type="KEGG" id="syn:slr0220"/>
<dbReference type="eggNOG" id="COG0751">
    <property type="taxonomic scope" value="Bacteria"/>
</dbReference>
<dbReference type="InParanoid" id="Q55690"/>
<dbReference type="PhylomeDB" id="Q55690"/>
<dbReference type="Proteomes" id="UP000001425">
    <property type="component" value="Chromosome"/>
</dbReference>
<dbReference type="GO" id="GO:0005829">
    <property type="term" value="C:cytosol"/>
    <property type="evidence" value="ECO:0000318"/>
    <property type="project" value="GO_Central"/>
</dbReference>
<dbReference type="GO" id="GO:0004814">
    <property type="term" value="F:arginine-tRNA ligase activity"/>
    <property type="evidence" value="ECO:0007669"/>
    <property type="project" value="InterPro"/>
</dbReference>
<dbReference type="GO" id="GO:0005524">
    <property type="term" value="F:ATP binding"/>
    <property type="evidence" value="ECO:0007669"/>
    <property type="project" value="UniProtKB-UniRule"/>
</dbReference>
<dbReference type="GO" id="GO:0004820">
    <property type="term" value="F:glycine-tRNA ligase activity"/>
    <property type="evidence" value="ECO:0007669"/>
    <property type="project" value="UniProtKB-UniRule"/>
</dbReference>
<dbReference type="GO" id="GO:0006420">
    <property type="term" value="P:arginyl-tRNA aminoacylation"/>
    <property type="evidence" value="ECO:0007669"/>
    <property type="project" value="InterPro"/>
</dbReference>
<dbReference type="GO" id="GO:0006426">
    <property type="term" value="P:glycyl-tRNA aminoacylation"/>
    <property type="evidence" value="ECO:0007669"/>
    <property type="project" value="UniProtKB-UniRule"/>
</dbReference>
<dbReference type="HAMAP" id="MF_00255">
    <property type="entry name" value="Gly_tRNA_synth_beta"/>
    <property type="match status" value="1"/>
</dbReference>
<dbReference type="InterPro" id="IPR008909">
    <property type="entry name" value="DALR_anticod-bd"/>
</dbReference>
<dbReference type="InterPro" id="IPR015944">
    <property type="entry name" value="Gly-tRNA-synth_bsu"/>
</dbReference>
<dbReference type="InterPro" id="IPR006194">
    <property type="entry name" value="Gly-tRNA-synth_heterodimer"/>
</dbReference>
<dbReference type="NCBIfam" id="TIGR00211">
    <property type="entry name" value="glyS"/>
    <property type="match status" value="1"/>
</dbReference>
<dbReference type="PANTHER" id="PTHR30075:SF2">
    <property type="entry name" value="GLYCINE--TRNA LIGASE, CHLOROPLASTIC_MITOCHONDRIAL 2"/>
    <property type="match status" value="1"/>
</dbReference>
<dbReference type="PANTHER" id="PTHR30075">
    <property type="entry name" value="GLYCYL-TRNA SYNTHETASE"/>
    <property type="match status" value="1"/>
</dbReference>
<dbReference type="Pfam" id="PF05746">
    <property type="entry name" value="DALR_1"/>
    <property type="match status" value="1"/>
</dbReference>
<dbReference type="Pfam" id="PF02092">
    <property type="entry name" value="tRNA_synt_2f"/>
    <property type="match status" value="1"/>
</dbReference>
<dbReference type="PRINTS" id="PR01045">
    <property type="entry name" value="TRNASYNTHGB"/>
</dbReference>
<dbReference type="SUPFAM" id="SSF109604">
    <property type="entry name" value="HD-domain/PDEase-like"/>
    <property type="match status" value="1"/>
</dbReference>
<dbReference type="PROSITE" id="PS50861">
    <property type="entry name" value="AA_TRNA_LIGASE_II_GLYAB"/>
    <property type="match status" value="1"/>
</dbReference>
<protein>
    <recommendedName>
        <fullName>Glycine--tRNA ligase beta subunit</fullName>
        <ecNumber>6.1.1.14</ecNumber>
    </recommendedName>
    <alternativeName>
        <fullName>Glycyl-tRNA synthetase beta subunit</fullName>
        <shortName>GlyRS</shortName>
    </alternativeName>
</protein>
<comment type="catalytic activity">
    <reaction>
        <text>tRNA(Gly) + glycine + ATP = glycyl-tRNA(Gly) + AMP + diphosphate</text>
        <dbReference type="Rhea" id="RHEA:16013"/>
        <dbReference type="Rhea" id="RHEA-COMP:9664"/>
        <dbReference type="Rhea" id="RHEA-COMP:9683"/>
        <dbReference type="ChEBI" id="CHEBI:30616"/>
        <dbReference type="ChEBI" id="CHEBI:33019"/>
        <dbReference type="ChEBI" id="CHEBI:57305"/>
        <dbReference type="ChEBI" id="CHEBI:78442"/>
        <dbReference type="ChEBI" id="CHEBI:78522"/>
        <dbReference type="ChEBI" id="CHEBI:456215"/>
        <dbReference type="EC" id="6.1.1.14"/>
    </reaction>
</comment>
<comment type="subunit">
    <text evidence="1">Tetramer of two alpha and two beta subunits.</text>
</comment>
<comment type="subcellular location">
    <subcellularLocation>
        <location evidence="1">Cytoplasm</location>
    </subcellularLocation>
</comment>
<comment type="similarity">
    <text evidence="2">Belongs to the class-II aminoacyl-tRNA synthetase family.</text>
</comment>